<comment type="function">
    <text evidence="1">One of two assembly initiator proteins, it binds directly to the 5'-end of the 23S rRNA, where it nucleates assembly of the 50S subunit.</text>
</comment>
<comment type="function">
    <text evidence="1">One of the proteins that surrounds the polypeptide exit tunnel on the outside of the subunit.</text>
</comment>
<comment type="subunit">
    <text evidence="1">Part of the 50S ribosomal subunit.</text>
</comment>
<comment type="similarity">
    <text evidence="1">Belongs to the universal ribosomal protein uL24 family.</text>
</comment>
<feature type="chain" id="PRO_0000355723" description="Large ribosomal subunit protein uL24">
    <location>
        <begin position="1"/>
        <end position="109"/>
    </location>
</feature>
<evidence type="ECO:0000255" key="1">
    <source>
        <dbReference type="HAMAP-Rule" id="MF_01326"/>
    </source>
</evidence>
<evidence type="ECO:0000305" key="2"/>
<sequence length="109" mass="12535">MKGQKSYRIKKNDTVMVVTGKDKGKSGKVLRVIYKKDRAIVEKLNMIKRHMKPSQQNRQGGILEKESPIHISNLMLICAKCTDPTRVGYKVLDDNKKVRFCKKCNEVID</sequence>
<reference key="1">
    <citation type="submission" date="2006-10" db="EMBL/GenBank/DDBJ databases">
        <title>Complete sequence of Syntrophobacter fumaroxidans MPOB.</title>
        <authorList>
            <consortium name="US DOE Joint Genome Institute"/>
            <person name="Copeland A."/>
            <person name="Lucas S."/>
            <person name="Lapidus A."/>
            <person name="Barry K."/>
            <person name="Detter J.C."/>
            <person name="Glavina del Rio T."/>
            <person name="Hammon N."/>
            <person name="Israni S."/>
            <person name="Pitluck S."/>
            <person name="Goltsman E.G."/>
            <person name="Martinez M."/>
            <person name="Schmutz J."/>
            <person name="Larimer F."/>
            <person name="Land M."/>
            <person name="Hauser L."/>
            <person name="Kyrpides N."/>
            <person name="Kim E."/>
            <person name="Boone D.R."/>
            <person name="Brockman F."/>
            <person name="Culley D."/>
            <person name="Ferry J."/>
            <person name="Gunsalus R."/>
            <person name="McInerney M.J."/>
            <person name="Morrison M."/>
            <person name="Plugge C."/>
            <person name="Rohlin L."/>
            <person name="Scholten J."/>
            <person name="Sieber J."/>
            <person name="Stams A.J.M."/>
            <person name="Worm P."/>
            <person name="Henstra A.M."/>
            <person name="Richardson P."/>
        </authorList>
    </citation>
    <scope>NUCLEOTIDE SEQUENCE [LARGE SCALE GENOMIC DNA]</scope>
    <source>
        <strain>DSM 10017 / MPOB</strain>
    </source>
</reference>
<keyword id="KW-1185">Reference proteome</keyword>
<keyword id="KW-0687">Ribonucleoprotein</keyword>
<keyword id="KW-0689">Ribosomal protein</keyword>
<keyword id="KW-0694">RNA-binding</keyword>
<keyword id="KW-0699">rRNA-binding</keyword>
<protein>
    <recommendedName>
        <fullName evidence="1">Large ribosomal subunit protein uL24</fullName>
    </recommendedName>
    <alternativeName>
        <fullName evidence="2">50S ribosomal protein L24</fullName>
    </alternativeName>
</protein>
<accession>A0LIK1</accession>
<gene>
    <name evidence="1" type="primary">rplX</name>
    <name type="ordered locus">Sfum_1566</name>
</gene>
<organism>
    <name type="scientific">Syntrophobacter fumaroxidans (strain DSM 10017 / MPOB)</name>
    <dbReference type="NCBI Taxonomy" id="335543"/>
    <lineage>
        <taxon>Bacteria</taxon>
        <taxon>Pseudomonadati</taxon>
        <taxon>Thermodesulfobacteriota</taxon>
        <taxon>Syntrophobacteria</taxon>
        <taxon>Syntrophobacterales</taxon>
        <taxon>Syntrophobacteraceae</taxon>
        <taxon>Syntrophobacter</taxon>
    </lineage>
</organism>
<dbReference type="EMBL" id="CP000478">
    <property type="protein sequence ID" value="ABK17253.1"/>
    <property type="molecule type" value="Genomic_DNA"/>
</dbReference>
<dbReference type="RefSeq" id="WP_011698423.1">
    <property type="nucleotide sequence ID" value="NC_008554.1"/>
</dbReference>
<dbReference type="SMR" id="A0LIK1"/>
<dbReference type="FunCoup" id="A0LIK1">
    <property type="interactions" value="612"/>
</dbReference>
<dbReference type="STRING" id="335543.Sfum_1566"/>
<dbReference type="KEGG" id="sfu:Sfum_1566"/>
<dbReference type="eggNOG" id="COG0198">
    <property type="taxonomic scope" value="Bacteria"/>
</dbReference>
<dbReference type="HOGENOM" id="CLU_093315_2_3_7"/>
<dbReference type="InParanoid" id="A0LIK1"/>
<dbReference type="OrthoDB" id="9807419at2"/>
<dbReference type="Proteomes" id="UP000001784">
    <property type="component" value="Chromosome"/>
</dbReference>
<dbReference type="GO" id="GO:1990904">
    <property type="term" value="C:ribonucleoprotein complex"/>
    <property type="evidence" value="ECO:0007669"/>
    <property type="project" value="UniProtKB-KW"/>
</dbReference>
<dbReference type="GO" id="GO:0005840">
    <property type="term" value="C:ribosome"/>
    <property type="evidence" value="ECO:0007669"/>
    <property type="project" value="UniProtKB-KW"/>
</dbReference>
<dbReference type="GO" id="GO:0019843">
    <property type="term" value="F:rRNA binding"/>
    <property type="evidence" value="ECO:0007669"/>
    <property type="project" value="UniProtKB-UniRule"/>
</dbReference>
<dbReference type="GO" id="GO:0003735">
    <property type="term" value="F:structural constituent of ribosome"/>
    <property type="evidence" value="ECO:0007669"/>
    <property type="project" value="InterPro"/>
</dbReference>
<dbReference type="GO" id="GO:0006412">
    <property type="term" value="P:translation"/>
    <property type="evidence" value="ECO:0007669"/>
    <property type="project" value="UniProtKB-UniRule"/>
</dbReference>
<dbReference type="CDD" id="cd06089">
    <property type="entry name" value="KOW_RPL26"/>
    <property type="match status" value="1"/>
</dbReference>
<dbReference type="FunFam" id="2.30.30.30:FF:000004">
    <property type="entry name" value="50S ribosomal protein L24"/>
    <property type="match status" value="1"/>
</dbReference>
<dbReference type="Gene3D" id="2.30.30.30">
    <property type="match status" value="1"/>
</dbReference>
<dbReference type="HAMAP" id="MF_01326_B">
    <property type="entry name" value="Ribosomal_uL24_B"/>
    <property type="match status" value="1"/>
</dbReference>
<dbReference type="InterPro" id="IPR005824">
    <property type="entry name" value="KOW"/>
</dbReference>
<dbReference type="InterPro" id="IPR014722">
    <property type="entry name" value="Rib_uL2_dom2"/>
</dbReference>
<dbReference type="InterPro" id="IPR003256">
    <property type="entry name" value="Ribosomal_uL24"/>
</dbReference>
<dbReference type="InterPro" id="IPR005825">
    <property type="entry name" value="Ribosomal_uL24_CS"/>
</dbReference>
<dbReference type="InterPro" id="IPR041988">
    <property type="entry name" value="Ribosomal_uL24_KOW"/>
</dbReference>
<dbReference type="InterPro" id="IPR008991">
    <property type="entry name" value="Translation_prot_SH3-like_sf"/>
</dbReference>
<dbReference type="NCBIfam" id="TIGR01079">
    <property type="entry name" value="rplX_bact"/>
    <property type="match status" value="1"/>
</dbReference>
<dbReference type="PANTHER" id="PTHR12903">
    <property type="entry name" value="MITOCHONDRIAL RIBOSOMAL PROTEIN L24"/>
    <property type="match status" value="1"/>
</dbReference>
<dbReference type="Pfam" id="PF00467">
    <property type="entry name" value="KOW"/>
    <property type="match status" value="1"/>
</dbReference>
<dbReference type="Pfam" id="PF17136">
    <property type="entry name" value="ribosomal_L24"/>
    <property type="match status" value="1"/>
</dbReference>
<dbReference type="SMART" id="SM00739">
    <property type="entry name" value="KOW"/>
    <property type="match status" value="1"/>
</dbReference>
<dbReference type="SUPFAM" id="SSF50104">
    <property type="entry name" value="Translation proteins SH3-like domain"/>
    <property type="match status" value="1"/>
</dbReference>
<dbReference type="PROSITE" id="PS01108">
    <property type="entry name" value="RIBOSOMAL_L24"/>
    <property type="match status" value="1"/>
</dbReference>
<name>RL24_SYNFM</name>
<proteinExistence type="inferred from homology"/>